<gene>
    <name evidence="1" type="primary">thyA</name>
    <name type="ordered locus">BCE33L2020</name>
</gene>
<feature type="chain" id="PRO_0000140922" description="Thymidylate synthase">
    <location>
        <begin position="1"/>
        <end position="318"/>
    </location>
</feature>
<feature type="active site" description="Nucleophile" evidence="1">
    <location>
        <position position="200"/>
    </location>
</feature>
<feature type="binding site" description="in other chain" evidence="1">
    <location>
        <position position="25"/>
    </location>
    <ligand>
        <name>dUMP</name>
        <dbReference type="ChEBI" id="CHEBI:246422"/>
        <note>ligand shared between dimeric partners</note>
    </ligand>
</feature>
<feature type="binding site" evidence="1">
    <location>
        <begin position="180"/>
        <end position="181"/>
    </location>
    <ligand>
        <name>dUMP</name>
        <dbReference type="ChEBI" id="CHEBI:246422"/>
        <note>ligand shared between dimeric partners</note>
    </ligand>
</feature>
<feature type="binding site" description="in other chain" evidence="1">
    <location>
        <begin position="220"/>
        <end position="223"/>
    </location>
    <ligand>
        <name>dUMP</name>
        <dbReference type="ChEBI" id="CHEBI:246422"/>
        <note>ligand shared between dimeric partners</note>
    </ligand>
</feature>
<feature type="binding site" evidence="1">
    <location>
        <position position="223"/>
    </location>
    <ligand>
        <name>(6R)-5,10-methylene-5,6,7,8-tetrahydrofolate</name>
        <dbReference type="ChEBI" id="CHEBI:15636"/>
    </ligand>
</feature>
<feature type="binding site" description="in other chain" evidence="1">
    <location>
        <position position="231"/>
    </location>
    <ligand>
        <name>dUMP</name>
        <dbReference type="ChEBI" id="CHEBI:246422"/>
        <note>ligand shared between dimeric partners</note>
    </ligand>
</feature>
<feature type="binding site" description="in other chain" evidence="1">
    <location>
        <begin position="261"/>
        <end position="263"/>
    </location>
    <ligand>
        <name>dUMP</name>
        <dbReference type="ChEBI" id="CHEBI:246422"/>
        <note>ligand shared between dimeric partners</note>
    </ligand>
</feature>
<feature type="binding site" evidence="1">
    <location>
        <position position="317"/>
    </location>
    <ligand>
        <name>(6R)-5,10-methylene-5,6,7,8-tetrahydrofolate</name>
        <dbReference type="ChEBI" id="CHEBI:15636"/>
    </ligand>
</feature>
<proteinExistence type="inferred from homology"/>
<sequence>MKHAENEYLNLCRHVMEHGTKKEDRTGTGTVSVFGYQMRFDLSKGFPLLTTKRVPFRLVASELLWFMKGDTNIRYLLQHNNNIWNEWAFKSWVESDEYTGPDMTDFGLRSQQDEEFKVQYDKQMELFKKNVLEDDDFSNKYGYLGDVYGKQWRAWKTTAGETLDQLKDVIEMIKKTPDSRRLIVSAWNPEDVPSMALPPCHTLFQFYVADGKLSCQLYQRSGDIFLGIPFNIASYSLLTHLIAHECGLEVGEFVHTIGDAHIYTNHFEQVEKQLAREPRPFPKLTLNPDVKSVFDFEMEDLTIEGYDPHPAIKAPVAV</sequence>
<organism>
    <name type="scientific">Bacillus cereus (strain ZK / E33L)</name>
    <dbReference type="NCBI Taxonomy" id="288681"/>
    <lineage>
        <taxon>Bacteria</taxon>
        <taxon>Bacillati</taxon>
        <taxon>Bacillota</taxon>
        <taxon>Bacilli</taxon>
        <taxon>Bacillales</taxon>
        <taxon>Bacillaceae</taxon>
        <taxon>Bacillus</taxon>
        <taxon>Bacillus cereus group</taxon>
    </lineage>
</organism>
<protein>
    <recommendedName>
        <fullName evidence="1">Thymidylate synthase</fullName>
        <shortName evidence="1">TS</shortName>
        <shortName evidence="1">TSase</shortName>
        <ecNumber evidence="1">2.1.1.45</ecNumber>
    </recommendedName>
</protein>
<keyword id="KW-0963">Cytoplasm</keyword>
<keyword id="KW-0489">Methyltransferase</keyword>
<keyword id="KW-0545">Nucleotide biosynthesis</keyword>
<keyword id="KW-0808">Transferase</keyword>
<evidence type="ECO:0000255" key="1">
    <source>
        <dbReference type="HAMAP-Rule" id="MF_00008"/>
    </source>
</evidence>
<comment type="function">
    <text evidence="1">Catalyzes the reductive methylation of 2'-deoxyuridine-5'-monophosphate (dUMP) to 2'-deoxythymidine-5'-monophosphate (dTMP) while utilizing 5,10-methylenetetrahydrofolate (mTHF) as the methyl donor and reductant in the reaction, yielding dihydrofolate (DHF) as a by-product. This enzymatic reaction provides an intracellular de novo source of dTMP, an essential precursor for DNA biosynthesis.</text>
</comment>
<comment type="catalytic activity">
    <reaction evidence="1">
        <text>dUMP + (6R)-5,10-methylene-5,6,7,8-tetrahydrofolate = 7,8-dihydrofolate + dTMP</text>
        <dbReference type="Rhea" id="RHEA:12104"/>
        <dbReference type="ChEBI" id="CHEBI:15636"/>
        <dbReference type="ChEBI" id="CHEBI:57451"/>
        <dbReference type="ChEBI" id="CHEBI:63528"/>
        <dbReference type="ChEBI" id="CHEBI:246422"/>
        <dbReference type="EC" id="2.1.1.45"/>
    </reaction>
</comment>
<comment type="pathway">
    <text evidence="1">Pyrimidine metabolism; dTTP biosynthesis.</text>
</comment>
<comment type="subunit">
    <text evidence="1">Homodimer.</text>
</comment>
<comment type="subcellular location">
    <subcellularLocation>
        <location evidence="1">Cytoplasm</location>
    </subcellularLocation>
</comment>
<comment type="similarity">
    <text evidence="1">Belongs to the thymidylate synthase family. Bacterial-type ThyA subfamily.</text>
</comment>
<accession>Q63BV5</accession>
<dbReference type="EC" id="2.1.1.45" evidence="1"/>
<dbReference type="EMBL" id="CP000001">
    <property type="protein sequence ID" value="AAU18236.1"/>
    <property type="molecule type" value="Genomic_DNA"/>
</dbReference>
<dbReference type="RefSeq" id="WP_000679612.1">
    <property type="nucleotide sequence ID" value="NC_006274.1"/>
</dbReference>
<dbReference type="SMR" id="Q63BV5"/>
<dbReference type="KEGG" id="bcz:BCE33L2020"/>
<dbReference type="PATRIC" id="fig|288681.22.peg.3504"/>
<dbReference type="UniPathway" id="UPA00575"/>
<dbReference type="Proteomes" id="UP000002612">
    <property type="component" value="Chromosome"/>
</dbReference>
<dbReference type="GO" id="GO:0005829">
    <property type="term" value="C:cytosol"/>
    <property type="evidence" value="ECO:0007669"/>
    <property type="project" value="TreeGrafter"/>
</dbReference>
<dbReference type="GO" id="GO:0004799">
    <property type="term" value="F:thymidylate synthase activity"/>
    <property type="evidence" value="ECO:0007669"/>
    <property type="project" value="UniProtKB-UniRule"/>
</dbReference>
<dbReference type="GO" id="GO:0006231">
    <property type="term" value="P:dTMP biosynthetic process"/>
    <property type="evidence" value="ECO:0007669"/>
    <property type="project" value="UniProtKB-UniRule"/>
</dbReference>
<dbReference type="GO" id="GO:0006235">
    <property type="term" value="P:dTTP biosynthetic process"/>
    <property type="evidence" value="ECO:0007669"/>
    <property type="project" value="UniProtKB-UniRule"/>
</dbReference>
<dbReference type="GO" id="GO:0032259">
    <property type="term" value="P:methylation"/>
    <property type="evidence" value="ECO:0007669"/>
    <property type="project" value="UniProtKB-KW"/>
</dbReference>
<dbReference type="CDD" id="cd00351">
    <property type="entry name" value="TS_Pyrimidine_HMase"/>
    <property type="match status" value="1"/>
</dbReference>
<dbReference type="Gene3D" id="3.30.572.10">
    <property type="entry name" value="Thymidylate synthase/dCMP hydroxymethylase domain"/>
    <property type="match status" value="1"/>
</dbReference>
<dbReference type="HAMAP" id="MF_00008">
    <property type="entry name" value="Thymidy_synth_bact"/>
    <property type="match status" value="1"/>
</dbReference>
<dbReference type="InterPro" id="IPR045097">
    <property type="entry name" value="Thymidate_synth/dCMP_Mease"/>
</dbReference>
<dbReference type="InterPro" id="IPR023451">
    <property type="entry name" value="Thymidate_synth/dCMP_Mease_dom"/>
</dbReference>
<dbReference type="InterPro" id="IPR036926">
    <property type="entry name" value="Thymidate_synth/dCMP_Mease_sf"/>
</dbReference>
<dbReference type="InterPro" id="IPR000398">
    <property type="entry name" value="Thymidylate_synthase"/>
</dbReference>
<dbReference type="InterPro" id="IPR020940">
    <property type="entry name" value="Thymidylate_synthase_AS"/>
</dbReference>
<dbReference type="NCBIfam" id="NF002496">
    <property type="entry name" value="PRK01827.1-2"/>
    <property type="match status" value="1"/>
</dbReference>
<dbReference type="NCBIfam" id="TIGR03284">
    <property type="entry name" value="thym_sym"/>
    <property type="match status" value="1"/>
</dbReference>
<dbReference type="PANTHER" id="PTHR11548:SF9">
    <property type="entry name" value="THYMIDYLATE SYNTHASE"/>
    <property type="match status" value="1"/>
</dbReference>
<dbReference type="PANTHER" id="PTHR11548">
    <property type="entry name" value="THYMIDYLATE SYNTHASE 1"/>
    <property type="match status" value="1"/>
</dbReference>
<dbReference type="Pfam" id="PF00303">
    <property type="entry name" value="Thymidylat_synt"/>
    <property type="match status" value="1"/>
</dbReference>
<dbReference type="PRINTS" id="PR00108">
    <property type="entry name" value="THYMDSNTHASE"/>
</dbReference>
<dbReference type="SUPFAM" id="SSF55831">
    <property type="entry name" value="Thymidylate synthase/dCMP hydroxymethylase"/>
    <property type="match status" value="1"/>
</dbReference>
<dbReference type="PROSITE" id="PS00091">
    <property type="entry name" value="THYMIDYLATE_SYNTHASE"/>
    <property type="match status" value="1"/>
</dbReference>
<name>TYSY_BACCZ</name>
<reference key="1">
    <citation type="journal article" date="2006" name="J. Bacteriol.">
        <title>Pathogenomic sequence analysis of Bacillus cereus and Bacillus thuringiensis isolates closely related to Bacillus anthracis.</title>
        <authorList>
            <person name="Han C.S."/>
            <person name="Xie G."/>
            <person name="Challacombe J.F."/>
            <person name="Altherr M.R."/>
            <person name="Bhotika S.S."/>
            <person name="Bruce D."/>
            <person name="Campbell C.S."/>
            <person name="Campbell M.L."/>
            <person name="Chen J."/>
            <person name="Chertkov O."/>
            <person name="Cleland C."/>
            <person name="Dimitrijevic M."/>
            <person name="Doggett N.A."/>
            <person name="Fawcett J.J."/>
            <person name="Glavina T."/>
            <person name="Goodwin L.A."/>
            <person name="Hill K.K."/>
            <person name="Hitchcock P."/>
            <person name="Jackson P.J."/>
            <person name="Keim P."/>
            <person name="Kewalramani A.R."/>
            <person name="Longmire J."/>
            <person name="Lucas S."/>
            <person name="Malfatti S."/>
            <person name="McMurry K."/>
            <person name="Meincke L.J."/>
            <person name="Misra M."/>
            <person name="Moseman B.L."/>
            <person name="Mundt M."/>
            <person name="Munk A.C."/>
            <person name="Okinaka R.T."/>
            <person name="Parson-Quintana B."/>
            <person name="Reilly L.P."/>
            <person name="Richardson P."/>
            <person name="Robinson D.L."/>
            <person name="Rubin E."/>
            <person name="Saunders E."/>
            <person name="Tapia R."/>
            <person name="Tesmer J.G."/>
            <person name="Thayer N."/>
            <person name="Thompson L.S."/>
            <person name="Tice H."/>
            <person name="Ticknor L.O."/>
            <person name="Wills P.L."/>
            <person name="Brettin T.S."/>
            <person name="Gilna P."/>
        </authorList>
    </citation>
    <scope>NUCLEOTIDE SEQUENCE [LARGE SCALE GENOMIC DNA]</scope>
    <source>
        <strain>ZK / E33L</strain>
    </source>
</reference>